<proteinExistence type="inferred from homology"/>
<keyword id="KW-0963">Cytoplasm</keyword>
<keyword id="KW-0396">Initiation factor</keyword>
<keyword id="KW-0648">Protein biosynthesis</keyword>
<protein>
    <recommendedName>
        <fullName evidence="1">Translation initiation factor IF-3</fullName>
    </recommendedName>
</protein>
<dbReference type="EMBL" id="CP000814">
    <property type="protein sequence ID" value="ABV51795.1"/>
    <property type="molecule type" value="Genomic_DNA"/>
</dbReference>
<dbReference type="RefSeq" id="WP_002851726.1">
    <property type="nucleotide sequence ID" value="NC_009839.1"/>
</dbReference>
<dbReference type="SMR" id="A8FK08"/>
<dbReference type="KEGG" id="cju:C8J_0196"/>
<dbReference type="HOGENOM" id="CLU_054919_3_2_7"/>
<dbReference type="GO" id="GO:0005829">
    <property type="term" value="C:cytosol"/>
    <property type="evidence" value="ECO:0007669"/>
    <property type="project" value="TreeGrafter"/>
</dbReference>
<dbReference type="GO" id="GO:0016020">
    <property type="term" value="C:membrane"/>
    <property type="evidence" value="ECO:0007669"/>
    <property type="project" value="TreeGrafter"/>
</dbReference>
<dbReference type="GO" id="GO:0043022">
    <property type="term" value="F:ribosome binding"/>
    <property type="evidence" value="ECO:0007669"/>
    <property type="project" value="TreeGrafter"/>
</dbReference>
<dbReference type="GO" id="GO:0003743">
    <property type="term" value="F:translation initiation factor activity"/>
    <property type="evidence" value="ECO:0007669"/>
    <property type="project" value="UniProtKB-UniRule"/>
</dbReference>
<dbReference type="GO" id="GO:0032790">
    <property type="term" value="P:ribosome disassembly"/>
    <property type="evidence" value="ECO:0007669"/>
    <property type="project" value="TreeGrafter"/>
</dbReference>
<dbReference type="FunFam" id="3.10.20.80:FF:000001">
    <property type="entry name" value="Translation initiation factor IF-3"/>
    <property type="match status" value="1"/>
</dbReference>
<dbReference type="Gene3D" id="3.30.110.10">
    <property type="entry name" value="Translation initiation factor 3 (IF-3), C-terminal domain"/>
    <property type="match status" value="1"/>
</dbReference>
<dbReference type="Gene3D" id="3.10.20.80">
    <property type="entry name" value="Translation initiation factor 3 (IF-3), N-terminal domain"/>
    <property type="match status" value="1"/>
</dbReference>
<dbReference type="HAMAP" id="MF_00080">
    <property type="entry name" value="IF_3"/>
    <property type="match status" value="1"/>
</dbReference>
<dbReference type="InterPro" id="IPR036788">
    <property type="entry name" value="T_IF-3_C_sf"/>
</dbReference>
<dbReference type="InterPro" id="IPR036787">
    <property type="entry name" value="T_IF-3_N_sf"/>
</dbReference>
<dbReference type="InterPro" id="IPR019813">
    <property type="entry name" value="Translation_initiation_fac3_CS"/>
</dbReference>
<dbReference type="InterPro" id="IPR001288">
    <property type="entry name" value="Translation_initiation_fac_3"/>
</dbReference>
<dbReference type="InterPro" id="IPR019815">
    <property type="entry name" value="Translation_initiation_fac_3_C"/>
</dbReference>
<dbReference type="InterPro" id="IPR019814">
    <property type="entry name" value="Translation_initiation_fac_3_N"/>
</dbReference>
<dbReference type="NCBIfam" id="TIGR00168">
    <property type="entry name" value="infC"/>
    <property type="match status" value="1"/>
</dbReference>
<dbReference type="PANTHER" id="PTHR10938">
    <property type="entry name" value="TRANSLATION INITIATION FACTOR IF-3"/>
    <property type="match status" value="1"/>
</dbReference>
<dbReference type="PANTHER" id="PTHR10938:SF0">
    <property type="entry name" value="TRANSLATION INITIATION FACTOR IF-3, MITOCHONDRIAL"/>
    <property type="match status" value="1"/>
</dbReference>
<dbReference type="Pfam" id="PF00707">
    <property type="entry name" value="IF3_C"/>
    <property type="match status" value="1"/>
</dbReference>
<dbReference type="Pfam" id="PF05198">
    <property type="entry name" value="IF3_N"/>
    <property type="match status" value="1"/>
</dbReference>
<dbReference type="SUPFAM" id="SSF55200">
    <property type="entry name" value="Translation initiation factor IF3, C-terminal domain"/>
    <property type="match status" value="1"/>
</dbReference>
<dbReference type="SUPFAM" id="SSF54364">
    <property type="entry name" value="Translation initiation factor IF3, N-terminal domain"/>
    <property type="match status" value="1"/>
</dbReference>
<dbReference type="PROSITE" id="PS00938">
    <property type="entry name" value="IF3"/>
    <property type="match status" value="1"/>
</dbReference>
<evidence type="ECO:0000255" key="1">
    <source>
        <dbReference type="HAMAP-Rule" id="MF_00080"/>
    </source>
</evidence>
<reference key="1">
    <citation type="journal article" date="2007" name="J. Bacteriol.">
        <title>The complete genome sequence of Campylobacter jejuni strain 81116 (NCTC11828).</title>
        <authorList>
            <person name="Pearson B.M."/>
            <person name="Gaskin D.J.H."/>
            <person name="Segers R.P.A.M."/>
            <person name="Wells J.M."/>
            <person name="Nuijten P.J.M."/>
            <person name="van Vliet A.H.M."/>
        </authorList>
    </citation>
    <scope>NUCLEOTIDE SEQUENCE [LARGE SCALE GENOMIC DNA]</scope>
    <source>
        <strain>81116 / NCTC 11828</strain>
    </source>
</reference>
<name>IF3_CAMJ8</name>
<comment type="function">
    <text evidence="1">IF-3 binds to the 30S ribosomal subunit and shifts the equilibrium between 70S ribosomes and their 50S and 30S subunits in favor of the free subunits, thus enhancing the availability of 30S subunits on which protein synthesis initiation begins.</text>
</comment>
<comment type="subunit">
    <text evidence="1">Monomer.</text>
</comment>
<comment type="subcellular location">
    <subcellularLocation>
        <location evidence="1">Cytoplasm</location>
    </subcellularLocation>
</comment>
<comment type="similarity">
    <text evidence="1">Belongs to the IF-3 family.</text>
</comment>
<organism>
    <name type="scientific">Campylobacter jejuni subsp. jejuni serotype O:6 (strain 81116 / NCTC 11828)</name>
    <dbReference type="NCBI Taxonomy" id="407148"/>
    <lineage>
        <taxon>Bacteria</taxon>
        <taxon>Pseudomonadati</taxon>
        <taxon>Campylobacterota</taxon>
        <taxon>Epsilonproteobacteria</taxon>
        <taxon>Campylobacterales</taxon>
        <taxon>Campylobacteraceae</taxon>
        <taxon>Campylobacter</taxon>
    </lineage>
</organism>
<sequence>MSKEKEVLLNEEIRADEIRCVGDDGKVYGIISSDEALEIANRLGLDLVMIAADAKPPVCKIMDYGKFRYQQEKKQKEAKKKQKVIDIKEIKLSVKIAQNDINYKVKHALEFLEQGKHVRFRVFLKGREMATPEAGVALLEKIWTMIENEANRDKEPNFEGRYVNMLVTPKKA</sequence>
<accession>A8FK08</accession>
<feature type="chain" id="PRO_1000071210" description="Translation initiation factor IF-3">
    <location>
        <begin position="1"/>
        <end position="172"/>
    </location>
</feature>
<gene>
    <name evidence="1" type="primary">infC</name>
    <name type="ordered locus">C8J_0196</name>
</gene>